<evidence type="ECO:0000250" key="1">
    <source>
        <dbReference type="UniProtKB" id="Q9UJW9"/>
    </source>
</evidence>
<evidence type="ECO:0000255" key="2">
    <source>
        <dbReference type="PROSITE-ProRule" id="PRU00396"/>
    </source>
</evidence>
<evidence type="ECO:0000256" key="3">
    <source>
        <dbReference type="SAM" id="MobiDB-lite"/>
    </source>
</evidence>
<evidence type="ECO:0000269" key="4">
    <source>
    </source>
</evidence>
<organism>
    <name type="scientific">Mus musculus</name>
    <name type="common">Mouse</name>
    <dbReference type="NCBI Taxonomy" id="10090"/>
    <lineage>
        <taxon>Eukaryota</taxon>
        <taxon>Metazoa</taxon>
        <taxon>Chordata</taxon>
        <taxon>Craniata</taxon>
        <taxon>Vertebrata</taxon>
        <taxon>Euteleostomi</taxon>
        <taxon>Mammalia</taxon>
        <taxon>Eutheria</taxon>
        <taxon>Euarchontoglires</taxon>
        <taxon>Glires</taxon>
        <taxon>Rodentia</taxon>
        <taxon>Myomorpha</taxon>
        <taxon>Muroidea</taxon>
        <taxon>Muridae</taxon>
        <taxon>Murinae</taxon>
        <taxon>Mus</taxon>
        <taxon>Mus</taxon>
    </lineage>
</organism>
<accession>Q9ERC3</accession>
<keyword id="KW-0010">Activator</keyword>
<keyword id="KW-0930">Antiviral protein</keyword>
<keyword id="KW-0945">Host-virus interaction</keyword>
<keyword id="KW-0391">Immunity</keyword>
<keyword id="KW-0399">Innate immunity</keyword>
<keyword id="KW-0539">Nucleus</keyword>
<keyword id="KW-1185">Reference proteome</keyword>
<keyword id="KW-0804">Transcription</keyword>
<keyword id="KW-0805">Transcription regulation</keyword>
<sequence length="197" mass="21935">MGGLKRKHSDLEEEEEEEKWDWSPTALRSYQQALLRISLDKVQRSLGPRAPSLRRHVLIHNTLQQLQAAIRLAPAPALPPEPLFLGEEDFSLSTTIGSILRELDTSMDEMEPPLNPAASSSPQNEIVSQADPVFLEALSSRYLGDSGLDDFFLDIDTSAVEKDVALPPPEPPHSLFCSPGSWEWNELDHIMEIILGS</sequence>
<comment type="function">
    <text evidence="1 4">Antiviral interferon-stimulated protein that plays a role in innate immunity and in the suppression of viruses through different mechanisms (By similarity). Plays a role in the late phase response of TLR-induced immune effector expression (PubMed:28750197). Strong transcriptional coactivator (By similarity).</text>
</comment>
<comment type="subunit">
    <text evidence="1">Interacts with RPA2.</text>
</comment>
<comment type="subcellular location">
    <subcellularLocation>
        <location evidence="1">Nucleus</location>
    </subcellularLocation>
    <subcellularLocation>
        <location evidence="1">Nucleus</location>
        <location evidence="1">Nucleolus</location>
    </subcellularLocation>
</comment>
<dbReference type="EMBL" id="AF317202">
    <property type="protein sequence ID" value="AAG30951.1"/>
    <property type="molecule type" value="mRNA"/>
</dbReference>
<dbReference type="EMBL" id="BC034886">
    <property type="protein sequence ID" value="AAH34886.1"/>
    <property type="molecule type" value="mRNA"/>
</dbReference>
<dbReference type="CCDS" id="CCDS21021.1"/>
<dbReference type="RefSeq" id="NP_573473.1">
    <property type="nucleotide sequence ID" value="NM_133210.2"/>
</dbReference>
<dbReference type="BioGRID" id="228408">
    <property type="interactions" value="1"/>
</dbReference>
<dbReference type="FunCoup" id="Q9ERC3">
    <property type="interactions" value="1423"/>
</dbReference>
<dbReference type="STRING" id="10090.ENSMUSP00000068187"/>
<dbReference type="iPTMnet" id="Q9ERC3"/>
<dbReference type="PhosphoSitePlus" id="Q9ERC3"/>
<dbReference type="PaxDb" id="10090-ENSMUSP00000068187"/>
<dbReference type="Antibodypedia" id="55379">
    <property type="antibodies" value="54 antibodies from 15 providers"/>
</dbReference>
<dbReference type="DNASU" id="170742"/>
<dbReference type="Ensembl" id="ENSMUST00000068641.8">
    <property type="protein sequence ID" value="ENSMUSP00000068187.7"/>
    <property type="gene ID" value="ENSMUSG00000055200.8"/>
</dbReference>
<dbReference type="GeneID" id="170742"/>
<dbReference type="KEGG" id="mmu:170742"/>
<dbReference type="UCSC" id="uc009fwg.1">
    <property type="organism name" value="mouse"/>
</dbReference>
<dbReference type="AGR" id="MGI:2180697"/>
<dbReference type="CTD" id="29946"/>
<dbReference type="MGI" id="MGI:2180697">
    <property type="gene designation" value="Sertad3"/>
</dbReference>
<dbReference type="VEuPathDB" id="HostDB:ENSMUSG00000055200"/>
<dbReference type="eggNOG" id="ENOG502RY30">
    <property type="taxonomic scope" value="Eukaryota"/>
</dbReference>
<dbReference type="GeneTree" id="ENSGT00940000154733"/>
<dbReference type="HOGENOM" id="CLU_097197_0_0_1"/>
<dbReference type="InParanoid" id="Q9ERC3"/>
<dbReference type="OMA" id="DWGSAES"/>
<dbReference type="OrthoDB" id="8735401at2759"/>
<dbReference type="PhylomeDB" id="Q9ERC3"/>
<dbReference type="TreeFam" id="TF101069"/>
<dbReference type="BioGRID-ORCS" id="170742">
    <property type="hits" value="1 hit in 76 CRISPR screens"/>
</dbReference>
<dbReference type="ChiTaRS" id="Sertad3">
    <property type="organism name" value="mouse"/>
</dbReference>
<dbReference type="PRO" id="PR:Q9ERC3"/>
<dbReference type="Proteomes" id="UP000000589">
    <property type="component" value="Chromosome 7"/>
</dbReference>
<dbReference type="RNAct" id="Q9ERC3">
    <property type="molecule type" value="protein"/>
</dbReference>
<dbReference type="Bgee" id="ENSMUSG00000055200">
    <property type="expression patterns" value="Expressed in granulocyte and 186 other cell types or tissues"/>
</dbReference>
<dbReference type="ExpressionAtlas" id="Q9ERC3">
    <property type="expression patterns" value="baseline and differential"/>
</dbReference>
<dbReference type="GO" id="GO:0005737">
    <property type="term" value="C:cytoplasm"/>
    <property type="evidence" value="ECO:0000247"/>
    <property type="project" value="MGI"/>
</dbReference>
<dbReference type="GO" id="GO:0005730">
    <property type="term" value="C:nucleolus"/>
    <property type="evidence" value="ECO:0007669"/>
    <property type="project" value="UniProtKB-SubCell"/>
</dbReference>
<dbReference type="GO" id="GO:0005634">
    <property type="term" value="C:nucleus"/>
    <property type="evidence" value="ECO:0000250"/>
    <property type="project" value="UniProtKB"/>
</dbReference>
<dbReference type="GO" id="GO:0045087">
    <property type="term" value="P:innate immune response"/>
    <property type="evidence" value="ECO:0007669"/>
    <property type="project" value="UniProtKB-KW"/>
</dbReference>
<dbReference type="GO" id="GO:0030308">
    <property type="term" value="P:negative regulation of cell growth"/>
    <property type="evidence" value="ECO:0000247"/>
    <property type="project" value="MGI"/>
</dbReference>
<dbReference type="GO" id="GO:0045893">
    <property type="term" value="P:positive regulation of DNA-templated transcription"/>
    <property type="evidence" value="ECO:0000314"/>
    <property type="project" value="MGI"/>
</dbReference>
<dbReference type="GO" id="GO:0050688">
    <property type="term" value="P:regulation of defense response to virus"/>
    <property type="evidence" value="ECO:0007669"/>
    <property type="project" value="UniProtKB-KW"/>
</dbReference>
<dbReference type="GO" id="GO:0006355">
    <property type="term" value="P:regulation of DNA-templated transcription"/>
    <property type="evidence" value="ECO:0000250"/>
    <property type="project" value="UniProtKB"/>
</dbReference>
<dbReference type="InterPro" id="IPR009263">
    <property type="entry name" value="SERTA_dom"/>
</dbReference>
<dbReference type="InterPro" id="IPR039585">
    <property type="entry name" value="SERTAD3"/>
</dbReference>
<dbReference type="PANTHER" id="PTHR15530">
    <property type="entry name" value="SERTA DOMAIN-CONTAINING PROTEIN 3"/>
    <property type="match status" value="1"/>
</dbReference>
<dbReference type="PANTHER" id="PTHR15530:SF0">
    <property type="entry name" value="SERTA DOMAIN-CONTAINING PROTEIN 3"/>
    <property type="match status" value="1"/>
</dbReference>
<dbReference type="Pfam" id="PF06031">
    <property type="entry name" value="SERTA"/>
    <property type="match status" value="1"/>
</dbReference>
<dbReference type="PROSITE" id="PS51053">
    <property type="entry name" value="SERTA"/>
    <property type="match status" value="1"/>
</dbReference>
<proteinExistence type="evidence at transcript level"/>
<name>SRTD3_MOUSE</name>
<protein>
    <recommendedName>
        <fullName>SERTA domain-containing protein 3</fullName>
    </recommendedName>
    <alternativeName>
        <fullName>Replication protein-binding trans-activator</fullName>
        <shortName>RPA-binding trans-activator</shortName>
    </alternativeName>
</protein>
<gene>
    <name type="primary">Sertad3</name>
    <name type="synonym">Rbt1</name>
</gene>
<feature type="chain" id="PRO_0000191616" description="SERTA domain-containing protein 3">
    <location>
        <begin position="1"/>
        <end position="197"/>
    </location>
</feature>
<feature type="domain" description="SERTA" evidence="2">
    <location>
        <begin position="27"/>
        <end position="74"/>
    </location>
</feature>
<feature type="region of interest" description="Disordered" evidence="3">
    <location>
        <begin position="1"/>
        <end position="23"/>
    </location>
</feature>
<reference key="1">
    <citation type="submission" date="2000-10" db="EMBL/GenBank/DDBJ databases">
        <title>Cloning of mouse RBT1 cDNA.</title>
        <authorList>
            <person name="Cho J.M."/>
            <person name="Alaoui-Jamali M.A."/>
        </authorList>
    </citation>
    <scope>NUCLEOTIDE SEQUENCE [MRNA]</scope>
</reference>
<reference key="2">
    <citation type="journal article" date="2004" name="Genome Res.">
        <title>The status, quality, and expansion of the NIH full-length cDNA project: the Mammalian Gene Collection (MGC).</title>
        <authorList>
            <consortium name="The MGC Project Team"/>
        </authorList>
    </citation>
    <scope>NUCLEOTIDE SEQUENCE [LARGE SCALE MRNA]</scope>
    <source>
        <strain>C57BL/6J</strain>
        <tissue>Mammary gland</tissue>
    </source>
</reference>
<reference key="3">
    <citation type="journal article" date="2017" name="Cell Syst.">
        <title>Systematic Investigation of Multi-TLR Sensing Identifies Regulators of Sustained Gene Activation in Macrophages.</title>
        <authorList>
            <person name="Lin B."/>
            <person name="Dutta B."/>
            <person name="Fraser I.D.C."/>
        </authorList>
    </citation>
    <scope>FUNCTION</scope>
</reference>